<accession>Q7W2F7</accession>
<keyword id="KW-0687">Ribonucleoprotein</keyword>
<keyword id="KW-0689">Ribosomal protein</keyword>
<comment type="function">
    <text evidence="1">Involved in the binding of tRNA to the ribosomes.</text>
</comment>
<comment type="subunit">
    <text evidence="1">Part of the 30S ribosomal subunit.</text>
</comment>
<comment type="similarity">
    <text evidence="1">Belongs to the universal ribosomal protein uS10 family.</text>
</comment>
<organism>
    <name type="scientific">Bordetella parapertussis (strain 12822 / ATCC BAA-587 / NCTC 13253)</name>
    <dbReference type="NCBI Taxonomy" id="257311"/>
    <lineage>
        <taxon>Bacteria</taxon>
        <taxon>Pseudomonadati</taxon>
        <taxon>Pseudomonadota</taxon>
        <taxon>Betaproteobacteria</taxon>
        <taxon>Burkholderiales</taxon>
        <taxon>Alcaligenaceae</taxon>
        <taxon>Bordetella</taxon>
    </lineage>
</organism>
<protein>
    <recommendedName>
        <fullName evidence="1">Small ribosomal subunit protein uS10</fullName>
    </recommendedName>
    <alternativeName>
        <fullName evidence="2">30S ribosomal protein S10</fullName>
    </alternativeName>
</protein>
<proteinExistence type="inferred from homology"/>
<evidence type="ECO:0000255" key="1">
    <source>
        <dbReference type="HAMAP-Rule" id="MF_00508"/>
    </source>
</evidence>
<evidence type="ECO:0000305" key="2"/>
<sequence length="103" mass="11788">MKNQKIRIRLKAFDYKLIDQSAAEIVDTAKRTGAVVRGPVPLPTRIRRYDVLRSPHVNKTSRDQFEIHTHQRLMDIVDPTDKTVDALMRLDLPAGVDVEIALQ</sequence>
<reference key="1">
    <citation type="journal article" date="2003" name="Nat. Genet.">
        <title>Comparative analysis of the genome sequences of Bordetella pertussis, Bordetella parapertussis and Bordetella bronchiseptica.</title>
        <authorList>
            <person name="Parkhill J."/>
            <person name="Sebaihia M."/>
            <person name="Preston A."/>
            <person name="Murphy L.D."/>
            <person name="Thomson N.R."/>
            <person name="Harris D.E."/>
            <person name="Holden M.T.G."/>
            <person name="Churcher C.M."/>
            <person name="Bentley S.D."/>
            <person name="Mungall K.L."/>
            <person name="Cerdeno-Tarraga A.-M."/>
            <person name="Temple L."/>
            <person name="James K.D."/>
            <person name="Harris B."/>
            <person name="Quail M.A."/>
            <person name="Achtman M."/>
            <person name="Atkin R."/>
            <person name="Baker S."/>
            <person name="Basham D."/>
            <person name="Bason N."/>
            <person name="Cherevach I."/>
            <person name="Chillingworth T."/>
            <person name="Collins M."/>
            <person name="Cronin A."/>
            <person name="Davis P."/>
            <person name="Doggett J."/>
            <person name="Feltwell T."/>
            <person name="Goble A."/>
            <person name="Hamlin N."/>
            <person name="Hauser H."/>
            <person name="Holroyd S."/>
            <person name="Jagels K."/>
            <person name="Leather S."/>
            <person name="Moule S."/>
            <person name="Norberczak H."/>
            <person name="O'Neil S."/>
            <person name="Ormond D."/>
            <person name="Price C."/>
            <person name="Rabbinowitsch E."/>
            <person name="Rutter S."/>
            <person name="Sanders M."/>
            <person name="Saunders D."/>
            <person name="Seeger K."/>
            <person name="Sharp S."/>
            <person name="Simmonds M."/>
            <person name="Skelton J."/>
            <person name="Squares R."/>
            <person name="Squares S."/>
            <person name="Stevens K."/>
            <person name="Unwin L."/>
            <person name="Whitehead S."/>
            <person name="Barrell B.G."/>
            <person name="Maskell D.J."/>
        </authorList>
    </citation>
    <scope>NUCLEOTIDE SEQUENCE [LARGE SCALE GENOMIC DNA]</scope>
    <source>
        <strain>12822 / ATCC BAA-587 / NCTC 13253</strain>
    </source>
</reference>
<gene>
    <name evidence="1" type="primary">rpsJ</name>
    <name type="ordered locus">BPP0028</name>
</gene>
<feature type="chain" id="PRO_0000146503" description="Small ribosomal subunit protein uS10">
    <location>
        <begin position="1"/>
        <end position="103"/>
    </location>
</feature>
<name>RS10_BORPA</name>
<dbReference type="EMBL" id="BX640423">
    <property type="protein sequence ID" value="CAE39769.1"/>
    <property type="molecule type" value="Genomic_DNA"/>
</dbReference>
<dbReference type="RefSeq" id="WP_010927268.1">
    <property type="nucleotide sequence ID" value="NC_002928.3"/>
</dbReference>
<dbReference type="SMR" id="Q7W2F7"/>
<dbReference type="GeneID" id="93206257"/>
<dbReference type="KEGG" id="bpa:BPP0028"/>
<dbReference type="HOGENOM" id="CLU_122625_1_3_4"/>
<dbReference type="Proteomes" id="UP000001421">
    <property type="component" value="Chromosome"/>
</dbReference>
<dbReference type="GO" id="GO:1990904">
    <property type="term" value="C:ribonucleoprotein complex"/>
    <property type="evidence" value="ECO:0007669"/>
    <property type="project" value="UniProtKB-KW"/>
</dbReference>
<dbReference type="GO" id="GO:0005840">
    <property type="term" value="C:ribosome"/>
    <property type="evidence" value="ECO:0007669"/>
    <property type="project" value="UniProtKB-KW"/>
</dbReference>
<dbReference type="GO" id="GO:0003735">
    <property type="term" value="F:structural constituent of ribosome"/>
    <property type="evidence" value="ECO:0007669"/>
    <property type="project" value="InterPro"/>
</dbReference>
<dbReference type="GO" id="GO:0000049">
    <property type="term" value="F:tRNA binding"/>
    <property type="evidence" value="ECO:0007669"/>
    <property type="project" value="UniProtKB-UniRule"/>
</dbReference>
<dbReference type="GO" id="GO:0006412">
    <property type="term" value="P:translation"/>
    <property type="evidence" value="ECO:0007669"/>
    <property type="project" value="UniProtKB-UniRule"/>
</dbReference>
<dbReference type="FunFam" id="3.30.70.600:FF:000001">
    <property type="entry name" value="30S ribosomal protein S10"/>
    <property type="match status" value="1"/>
</dbReference>
<dbReference type="Gene3D" id="3.30.70.600">
    <property type="entry name" value="Ribosomal protein S10 domain"/>
    <property type="match status" value="1"/>
</dbReference>
<dbReference type="HAMAP" id="MF_00508">
    <property type="entry name" value="Ribosomal_uS10"/>
    <property type="match status" value="1"/>
</dbReference>
<dbReference type="InterPro" id="IPR001848">
    <property type="entry name" value="Ribosomal_uS10"/>
</dbReference>
<dbReference type="InterPro" id="IPR018268">
    <property type="entry name" value="Ribosomal_uS10_CS"/>
</dbReference>
<dbReference type="InterPro" id="IPR027486">
    <property type="entry name" value="Ribosomal_uS10_dom"/>
</dbReference>
<dbReference type="InterPro" id="IPR036838">
    <property type="entry name" value="Ribosomal_uS10_dom_sf"/>
</dbReference>
<dbReference type="NCBIfam" id="NF001861">
    <property type="entry name" value="PRK00596.1"/>
    <property type="match status" value="1"/>
</dbReference>
<dbReference type="NCBIfam" id="TIGR01049">
    <property type="entry name" value="rpsJ_bact"/>
    <property type="match status" value="1"/>
</dbReference>
<dbReference type="PANTHER" id="PTHR11700">
    <property type="entry name" value="30S RIBOSOMAL PROTEIN S10 FAMILY MEMBER"/>
    <property type="match status" value="1"/>
</dbReference>
<dbReference type="Pfam" id="PF00338">
    <property type="entry name" value="Ribosomal_S10"/>
    <property type="match status" value="1"/>
</dbReference>
<dbReference type="PRINTS" id="PR00971">
    <property type="entry name" value="RIBOSOMALS10"/>
</dbReference>
<dbReference type="SMART" id="SM01403">
    <property type="entry name" value="Ribosomal_S10"/>
    <property type="match status" value="1"/>
</dbReference>
<dbReference type="SUPFAM" id="SSF54999">
    <property type="entry name" value="Ribosomal protein S10"/>
    <property type="match status" value="1"/>
</dbReference>
<dbReference type="PROSITE" id="PS00361">
    <property type="entry name" value="RIBOSOMAL_S10"/>
    <property type="match status" value="1"/>
</dbReference>